<proteinExistence type="inferred from homology"/>
<protein>
    <recommendedName>
        <fullName>Cytochrome b</fullName>
    </recommendedName>
    <alternativeName>
        <fullName>Complex III subunit 3</fullName>
    </alternativeName>
    <alternativeName>
        <fullName>Complex III subunit III</fullName>
    </alternativeName>
    <alternativeName>
        <fullName>Cytochrome b-c1 complex subunit 3</fullName>
    </alternativeName>
    <alternativeName>
        <fullName>Ubiquinol-cytochrome-c reductase complex cytochrome b subunit</fullName>
    </alternativeName>
</protein>
<feature type="chain" id="PRO_0000061032" description="Cytochrome b">
    <location>
        <begin position="1"/>
        <end position="379"/>
    </location>
</feature>
<feature type="transmembrane region" description="Helical" evidence="2">
    <location>
        <begin position="33"/>
        <end position="53"/>
    </location>
</feature>
<feature type="transmembrane region" description="Helical" evidence="2">
    <location>
        <begin position="77"/>
        <end position="98"/>
    </location>
</feature>
<feature type="transmembrane region" description="Helical" evidence="2">
    <location>
        <begin position="113"/>
        <end position="133"/>
    </location>
</feature>
<feature type="transmembrane region" description="Helical" evidence="2">
    <location>
        <begin position="178"/>
        <end position="198"/>
    </location>
</feature>
<feature type="transmembrane region" description="Helical" evidence="2">
    <location>
        <begin position="226"/>
        <end position="246"/>
    </location>
</feature>
<feature type="transmembrane region" description="Helical" evidence="2">
    <location>
        <begin position="288"/>
        <end position="308"/>
    </location>
</feature>
<feature type="transmembrane region" description="Helical" evidence="2">
    <location>
        <begin position="320"/>
        <end position="340"/>
    </location>
</feature>
<feature type="transmembrane region" description="Helical" evidence="2">
    <location>
        <begin position="347"/>
        <end position="367"/>
    </location>
</feature>
<feature type="binding site" description="axial binding residue" evidence="2">
    <location>
        <position position="83"/>
    </location>
    <ligand>
        <name>heme b</name>
        <dbReference type="ChEBI" id="CHEBI:60344"/>
        <label>b562</label>
    </ligand>
    <ligandPart>
        <name>Fe</name>
        <dbReference type="ChEBI" id="CHEBI:18248"/>
    </ligandPart>
</feature>
<feature type="binding site" description="axial binding residue" evidence="2">
    <location>
        <position position="97"/>
    </location>
    <ligand>
        <name>heme b</name>
        <dbReference type="ChEBI" id="CHEBI:60344"/>
        <label>b566</label>
    </ligand>
    <ligandPart>
        <name>Fe</name>
        <dbReference type="ChEBI" id="CHEBI:18248"/>
    </ligandPart>
</feature>
<feature type="binding site" description="axial binding residue" evidence="2">
    <location>
        <position position="182"/>
    </location>
    <ligand>
        <name>heme b</name>
        <dbReference type="ChEBI" id="CHEBI:60344"/>
        <label>b562</label>
    </ligand>
    <ligandPart>
        <name>Fe</name>
        <dbReference type="ChEBI" id="CHEBI:18248"/>
    </ligandPart>
</feature>
<feature type="binding site" description="axial binding residue" evidence="2">
    <location>
        <position position="196"/>
    </location>
    <ligand>
        <name>heme b</name>
        <dbReference type="ChEBI" id="CHEBI:60344"/>
        <label>b566</label>
    </ligand>
    <ligandPart>
        <name>Fe</name>
        <dbReference type="ChEBI" id="CHEBI:18248"/>
    </ligandPart>
</feature>
<feature type="binding site" evidence="2">
    <location>
        <position position="201"/>
    </location>
    <ligand>
        <name>a ubiquinone</name>
        <dbReference type="ChEBI" id="CHEBI:16389"/>
    </ligand>
</feature>
<evidence type="ECO:0000250" key="1"/>
<evidence type="ECO:0000250" key="2">
    <source>
        <dbReference type="UniProtKB" id="P00157"/>
    </source>
</evidence>
<evidence type="ECO:0000255" key="3">
    <source>
        <dbReference type="PROSITE-ProRule" id="PRU00967"/>
    </source>
</evidence>
<evidence type="ECO:0000255" key="4">
    <source>
        <dbReference type="PROSITE-ProRule" id="PRU00968"/>
    </source>
</evidence>
<sequence length="379" mass="42728">MTNIRKSHPLIKIVNESFIDLPAPSNISAWWNFGSLLGVCLILQILTGLFLAMHYTSDTLTAFSSVTHICRDVNYGWVIRYMHANGASMFFICLFMHVGRGMYYGSYTFMETWNIGILLLFTVMATAFMGYVLPWGQMSFWGATVITNLLSAIPYIGTNLVEWIWGGFSVDKATLTRFFAFHFILPFIISALAAVHLLFLHETGSNNPSGILSDSDKIPFHPYYTIKDILGLLIMLMVLMILVLFSPDLLGDPDNYTPANPLNTPPHIKPEWYFLFAYAILRSIPNKLGGVLALVLSIMILAIVPLLHTSNQRGMMFRPLSQCLFWLLVADLLTLTWIGGQPVEHPFITIGQLASILYFSIILILMPIFGTIENQLLKW</sequence>
<accession>Q85PN4</accession>
<gene>
    <name type="primary">MT-CYB</name>
    <name type="synonym">COB</name>
    <name type="synonym">CYTB</name>
    <name type="synonym">MTCYB</name>
</gene>
<comment type="function">
    <text evidence="2">Component of the ubiquinol-cytochrome c reductase complex (complex III or cytochrome b-c1 complex) that is part of the mitochondrial respiratory chain. The b-c1 complex mediates electron transfer from ubiquinol to cytochrome c. Contributes to the generation of a proton gradient across the mitochondrial membrane that is then used for ATP synthesis.</text>
</comment>
<comment type="cofactor">
    <cofactor evidence="2">
        <name>heme b</name>
        <dbReference type="ChEBI" id="CHEBI:60344"/>
    </cofactor>
    <text evidence="2">Binds 2 heme b groups non-covalently.</text>
</comment>
<comment type="subunit">
    <text evidence="2">The cytochrome bc1 complex contains 11 subunits: 3 respiratory subunits (MT-CYB, CYC1 and UQCRFS1), 2 core proteins (UQCRC1 and UQCRC2) and 6 low-molecular weight proteins (UQCRH/QCR6, UQCRB/QCR7, UQCRQ/QCR8, UQCR10/QCR9, UQCR11/QCR10 and a cleavage product of UQCRFS1). This cytochrome bc1 complex then forms a dimer.</text>
</comment>
<comment type="subcellular location">
    <subcellularLocation>
        <location evidence="2">Mitochondrion inner membrane</location>
        <topology evidence="2">Multi-pass membrane protein</topology>
    </subcellularLocation>
</comment>
<comment type="miscellaneous">
    <text evidence="1">Heme 1 (or BL or b562) is low-potential and absorbs at about 562 nm, and heme 2 (or BH or b566) is high-potential and absorbs at about 566 nm.</text>
</comment>
<comment type="similarity">
    <text evidence="3 4">Belongs to the cytochrome b family.</text>
</comment>
<comment type="caution">
    <text evidence="2">The full-length protein contains only eight transmembrane helices, not nine as predicted by bioinformatics tools.</text>
</comment>
<keyword id="KW-0249">Electron transport</keyword>
<keyword id="KW-0349">Heme</keyword>
<keyword id="KW-0408">Iron</keyword>
<keyword id="KW-0472">Membrane</keyword>
<keyword id="KW-0479">Metal-binding</keyword>
<keyword id="KW-0496">Mitochondrion</keyword>
<keyword id="KW-0999">Mitochondrion inner membrane</keyword>
<keyword id="KW-0679">Respiratory chain</keyword>
<keyword id="KW-0812">Transmembrane</keyword>
<keyword id="KW-1133">Transmembrane helix</keyword>
<keyword id="KW-0813">Transport</keyword>
<keyword id="KW-0830">Ubiquinone</keyword>
<name>CYB_HERED</name>
<reference key="1">
    <citation type="journal article" date="2003" name="Nature">
        <title>Single origin of Malagasy Carnivora from an African ancestor.</title>
        <authorList>
            <person name="Yoder A.D."/>
            <person name="Burns M.M."/>
            <person name="Zehr S."/>
            <person name="Delefosse T."/>
            <person name="Veron G."/>
            <person name="Goodman S.M."/>
            <person name="Flynn J.J."/>
        </authorList>
    </citation>
    <scope>NUCLEOTIDE SEQUENCE [GENOMIC DNA]</scope>
    <source>
        <strain>Isolate UVM DNA 293</strain>
    </source>
</reference>
<organism>
    <name type="scientific">Herpestes edwardsi</name>
    <name type="common">Indian gray mongoose</name>
    <name type="synonym">Urva edwardsii</name>
    <dbReference type="NCBI Taxonomy" id="39705"/>
    <lineage>
        <taxon>Eukaryota</taxon>
        <taxon>Metazoa</taxon>
        <taxon>Chordata</taxon>
        <taxon>Craniata</taxon>
        <taxon>Vertebrata</taxon>
        <taxon>Euteleostomi</taxon>
        <taxon>Mammalia</taxon>
        <taxon>Eutheria</taxon>
        <taxon>Laurasiatheria</taxon>
        <taxon>Carnivora</taxon>
        <taxon>Feliformia</taxon>
        <taxon>Herpestidae</taxon>
        <taxon>Urva</taxon>
    </lineage>
</organism>
<dbReference type="EMBL" id="AY170107">
    <property type="protein sequence ID" value="AAN85626.1"/>
    <property type="molecule type" value="Genomic_DNA"/>
</dbReference>
<dbReference type="SMR" id="Q85PN4"/>
<dbReference type="GO" id="GO:0005743">
    <property type="term" value="C:mitochondrial inner membrane"/>
    <property type="evidence" value="ECO:0007669"/>
    <property type="project" value="UniProtKB-SubCell"/>
</dbReference>
<dbReference type="GO" id="GO:0045275">
    <property type="term" value="C:respiratory chain complex III"/>
    <property type="evidence" value="ECO:0007669"/>
    <property type="project" value="InterPro"/>
</dbReference>
<dbReference type="GO" id="GO:0046872">
    <property type="term" value="F:metal ion binding"/>
    <property type="evidence" value="ECO:0007669"/>
    <property type="project" value="UniProtKB-KW"/>
</dbReference>
<dbReference type="GO" id="GO:0008121">
    <property type="term" value="F:ubiquinol-cytochrome-c reductase activity"/>
    <property type="evidence" value="ECO:0007669"/>
    <property type="project" value="InterPro"/>
</dbReference>
<dbReference type="GO" id="GO:0006122">
    <property type="term" value="P:mitochondrial electron transport, ubiquinol to cytochrome c"/>
    <property type="evidence" value="ECO:0007669"/>
    <property type="project" value="TreeGrafter"/>
</dbReference>
<dbReference type="CDD" id="cd00290">
    <property type="entry name" value="cytochrome_b_C"/>
    <property type="match status" value="1"/>
</dbReference>
<dbReference type="CDD" id="cd00284">
    <property type="entry name" value="Cytochrome_b_N"/>
    <property type="match status" value="1"/>
</dbReference>
<dbReference type="FunFam" id="1.20.810.10:FF:000002">
    <property type="entry name" value="Cytochrome b"/>
    <property type="match status" value="1"/>
</dbReference>
<dbReference type="Gene3D" id="1.20.810.10">
    <property type="entry name" value="Cytochrome Bc1 Complex, Chain C"/>
    <property type="match status" value="1"/>
</dbReference>
<dbReference type="InterPro" id="IPR005798">
    <property type="entry name" value="Cyt_b/b6_C"/>
</dbReference>
<dbReference type="InterPro" id="IPR036150">
    <property type="entry name" value="Cyt_b/b6_C_sf"/>
</dbReference>
<dbReference type="InterPro" id="IPR005797">
    <property type="entry name" value="Cyt_b/b6_N"/>
</dbReference>
<dbReference type="InterPro" id="IPR027387">
    <property type="entry name" value="Cytb/b6-like_sf"/>
</dbReference>
<dbReference type="InterPro" id="IPR030689">
    <property type="entry name" value="Cytochrome_b"/>
</dbReference>
<dbReference type="InterPro" id="IPR048260">
    <property type="entry name" value="Cytochrome_b_C_euk/bac"/>
</dbReference>
<dbReference type="InterPro" id="IPR048259">
    <property type="entry name" value="Cytochrome_b_N_euk/bac"/>
</dbReference>
<dbReference type="InterPro" id="IPR016174">
    <property type="entry name" value="Di-haem_cyt_TM"/>
</dbReference>
<dbReference type="PANTHER" id="PTHR19271">
    <property type="entry name" value="CYTOCHROME B"/>
    <property type="match status" value="1"/>
</dbReference>
<dbReference type="PANTHER" id="PTHR19271:SF16">
    <property type="entry name" value="CYTOCHROME B"/>
    <property type="match status" value="1"/>
</dbReference>
<dbReference type="Pfam" id="PF00032">
    <property type="entry name" value="Cytochrom_B_C"/>
    <property type="match status" value="1"/>
</dbReference>
<dbReference type="Pfam" id="PF00033">
    <property type="entry name" value="Cytochrome_B"/>
    <property type="match status" value="1"/>
</dbReference>
<dbReference type="PIRSF" id="PIRSF038885">
    <property type="entry name" value="COB"/>
    <property type="match status" value="1"/>
</dbReference>
<dbReference type="SUPFAM" id="SSF81648">
    <property type="entry name" value="a domain/subunit of cytochrome bc1 complex (Ubiquinol-cytochrome c reductase)"/>
    <property type="match status" value="1"/>
</dbReference>
<dbReference type="SUPFAM" id="SSF81342">
    <property type="entry name" value="Transmembrane di-heme cytochromes"/>
    <property type="match status" value="1"/>
</dbReference>
<dbReference type="PROSITE" id="PS51003">
    <property type="entry name" value="CYTB_CTER"/>
    <property type="match status" value="1"/>
</dbReference>
<dbReference type="PROSITE" id="PS51002">
    <property type="entry name" value="CYTB_NTER"/>
    <property type="match status" value="1"/>
</dbReference>
<geneLocation type="mitochondrion"/>